<keyword id="KW-0963">Cytoplasm</keyword>
<keyword id="KW-0275">Fatty acid biosynthesis</keyword>
<keyword id="KW-0276">Fatty acid metabolism</keyword>
<keyword id="KW-0444">Lipid biosynthesis</keyword>
<keyword id="KW-0443">Lipid metabolism</keyword>
<keyword id="KW-0460">Magnesium</keyword>
<keyword id="KW-0479">Metal-binding</keyword>
<keyword id="KW-0808">Transferase</keyword>
<dbReference type="EC" id="2.7.8.7" evidence="1"/>
<dbReference type="EMBL" id="CP000419">
    <property type="protein sequence ID" value="ABJ66845.1"/>
    <property type="molecule type" value="Genomic_DNA"/>
</dbReference>
<dbReference type="RefSeq" id="WP_011681612.1">
    <property type="nucleotide sequence ID" value="NZ_CP086001.1"/>
</dbReference>
<dbReference type="SMR" id="Q03IX7"/>
<dbReference type="KEGG" id="ste:STER_1702"/>
<dbReference type="HOGENOM" id="CLU_089696_1_2_9"/>
<dbReference type="GO" id="GO:0005737">
    <property type="term" value="C:cytoplasm"/>
    <property type="evidence" value="ECO:0007669"/>
    <property type="project" value="UniProtKB-SubCell"/>
</dbReference>
<dbReference type="GO" id="GO:0008897">
    <property type="term" value="F:holo-[acyl-carrier-protein] synthase activity"/>
    <property type="evidence" value="ECO:0007669"/>
    <property type="project" value="UniProtKB-UniRule"/>
</dbReference>
<dbReference type="GO" id="GO:0000287">
    <property type="term" value="F:magnesium ion binding"/>
    <property type="evidence" value="ECO:0007669"/>
    <property type="project" value="UniProtKB-UniRule"/>
</dbReference>
<dbReference type="GO" id="GO:0006633">
    <property type="term" value="P:fatty acid biosynthetic process"/>
    <property type="evidence" value="ECO:0007669"/>
    <property type="project" value="UniProtKB-UniRule"/>
</dbReference>
<dbReference type="Gene3D" id="3.90.470.20">
    <property type="entry name" value="4'-phosphopantetheinyl transferase domain"/>
    <property type="match status" value="1"/>
</dbReference>
<dbReference type="HAMAP" id="MF_00101">
    <property type="entry name" value="AcpS"/>
    <property type="match status" value="1"/>
</dbReference>
<dbReference type="InterPro" id="IPR008278">
    <property type="entry name" value="4-PPantetheinyl_Trfase_dom"/>
</dbReference>
<dbReference type="InterPro" id="IPR037143">
    <property type="entry name" value="4-PPantetheinyl_Trfase_dom_sf"/>
</dbReference>
<dbReference type="InterPro" id="IPR002582">
    <property type="entry name" value="ACPS"/>
</dbReference>
<dbReference type="InterPro" id="IPR004568">
    <property type="entry name" value="Ppantetheine-prot_Trfase_dom"/>
</dbReference>
<dbReference type="NCBIfam" id="TIGR00516">
    <property type="entry name" value="acpS"/>
    <property type="match status" value="1"/>
</dbReference>
<dbReference type="NCBIfam" id="TIGR00556">
    <property type="entry name" value="pantethn_trn"/>
    <property type="match status" value="1"/>
</dbReference>
<dbReference type="Pfam" id="PF01648">
    <property type="entry name" value="ACPS"/>
    <property type="match status" value="1"/>
</dbReference>
<dbReference type="SUPFAM" id="SSF56214">
    <property type="entry name" value="4'-phosphopantetheinyl transferase"/>
    <property type="match status" value="1"/>
</dbReference>
<organism>
    <name type="scientific">Streptococcus thermophilus (strain ATCC BAA-491 / LMD-9)</name>
    <dbReference type="NCBI Taxonomy" id="322159"/>
    <lineage>
        <taxon>Bacteria</taxon>
        <taxon>Bacillati</taxon>
        <taxon>Bacillota</taxon>
        <taxon>Bacilli</taxon>
        <taxon>Lactobacillales</taxon>
        <taxon>Streptococcaceae</taxon>
        <taxon>Streptococcus</taxon>
    </lineage>
</organism>
<evidence type="ECO:0000255" key="1">
    <source>
        <dbReference type="HAMAP-Rule" id="MF_00101"/>
    </source>
</evidence>
<name>ACPS_STRTD</name>
<feature type="chain" id="PRO_1000008518" description="Holo-[acyl-carrier-protein] synthase">
    <location>
        <begin position="1"/>
        <end position="119"/>
    </location>
</feature>
<feature type="binding site" evidence="1">
    <location>
        <position position="8"/>
    </location>
    <ligand>
        <name>Mg(2+)</name>
        <dbReference type="ChEBI" id="CHEBI:18420"/>
    </ligand>
</feature>
<feature type="binding site" evidence="1">
    <location>
        <position position="58"/>
    </location>
    <ligand>
        <name>Mg(2+)</name>
        <dbReference type="ChEBI" id="CHEBI:18420"/>
    </ligand>
</feature>
<proteinExistence type="inferred from homology"/>
<protein>
    <recommendedName>
        <fullName evidence="1">Holo-[acyl-carrier-protein] synthase</fullName>
        <shortName evidence="1">Holo-ACP synthase</shortName>
        <ecNumber evidence="1">2.7.8.7</ecNumber>
    </recommendedName>
    <alternativeName>
        <fullName evidence="1">4'-phosphopantetheinyl transferase AcpS</fullName>
    </alternativeName>
</protein>
<gene>
    <name evidence="1" type="primary">acpS</name>
    <name type="ordered locus">STER_1702</name>
</gene>
<reference key="1">
    <citation type="journal article" date="2006" name="Proc. Natl. Acad. Sci. U.S.A.">
        <title>Comparative genomics of the lactic acid bacteria.</title>
        <authorList>
            <person name="Makarova K.S."/>
            <person name="Slesarev A."/>
            <person name="Wolf Y.I."/>
            <person name="Sorokin A."/>
            <person name="Mirkin B."/>
            <person name="Koonin E.V."/>
            <person name="Pavlov A."/>
            <person name="Pavlova N."/>
            <person name="Karamychev V."/>
            <person name="Polouchine N."/>
            <person name="Shakhova V."/>
            <person name="Grigoriev I."/>
            <person name="Lou Y."/>
            <person name="Rohksar D."/>
            <person name="Lucas S."/>
            <person name="Huang K."/>
            <person name="Goodstein D.M."/>
            <person name="Hawkins T."/>
            <person name="Plengvidhya V."/>
            <person name="Welker D."/>
            <person name="Hughes J."/>
            <person name="Goh Y."/>
            <person name="Benson A."/>
            <person name="Baldwin K."/>
            <person name="Lee J.-H."/>
            <person name="Diaz-Muniz I."/>
            <person name="Dosti B."/>
            <person name="Smeianov V."/>
            <person name="Wechter W."/>
            <person name="Barabote R."/>
            <person name="Lorca G."/>
            <person name="Altermann E."/>
            <person name="Barrangou R."/>
            <person name="Ganesan B."/>
            <person name="Xie Y."/>
            <person name="Rawsthorne H."/>
            <person name="Tamir D."/>
            <person name="Parker C."/>
            <person name="Breidt F."/>
            <person name="Broadbent J.R."/>
            <person name="Hutkins R."/>
            <person name="O'Sullivan D."/>
            <person name="Steele J."/>
            <person name="Unlu G."/>
            <person name="Saier M.H. Jr."/>
            <person name="Klaenhammer T."/>
            <person name="Richardson P."/>
            <person name="Kozyavkin S."/>
            <person name="Weimer B.C."/>
            <person name="Mills D.A."/>
        </authorList>
    </citation>
    <scope>NUCLEOTIDE SEQUENCE [LARGE SCALE GENOMIC DNA]</scope>
    <source>
        <strain>ATCC BAA-491 / LMD-9</strain>
    </source>
</reference>
<sequence length="119" mass="13217">MIFGHGIDLQEISAVKKAYDRNPRFAKKVLTPKEWERFESLSGERQMSFLAGRWAGKEAFSKAWGTGIGAVGFKDIEILNNDKGAPVVTQSPFEGNVFISISHSGDFVQASVILEKNKR</sequence>
<accession>Q03IX7</accession>
<comment type="function">
    <text evidence="1">Transfers the 4'-phosphopantetheine moiety from coenzyme A to a Ser of acyl-carrier-protein.</text>
</comment>
<comment type="catalytic activity">
    <reaction evidence="1">
        <text>apo-[ACP] + CoA = holo-[ACP] + adenosine 3',5'-bisphosphate + H(+)</text>
        <dbReference type="Rhea" id="RHEA:12068"/>
        <dbReference type="Rhea" id="RHEA-COMP:9685"/>
        <dbReference type="Rhea" id="RHEA-COMP:9690"/>
        <dbReference type="ChEBI" id="CHEBI:15378"/>
        <dbReference type="ChEBI" id="CHEBI:29999"/>
        <dbReference type="ChEBI" id="CHEBI:57287"/>
        <dbReference type="ChEBI" id="CHEBI:58343"/>
        <dbReference type="ChEBI" id="CHEBI:64479"/>
        <dbReference type="EC" id="2.7.8.7"/>
    </reaction>
</comment>
<comment type="cofactor">
    <cofactor evidence="1">
        <name>Mg(2+)</name>
        <dbReference type="ChEBI" id="CHEBI:18420"/>
    </cofactor>
</comment>
<comment type="subcellular location">
    <subcellularLocation>
        <location evidence="1">Cytoplasm</location>
    </subcellularLocation>
</comment>
<comment type="similarity">
    <text evidence="1">Belongs to the P-Pant transferase superfamily. AcpS family.</text>
</comment>